<sequence>MFDQTTHTEAHPLTVGKIETANGTIKPQLLRDAVKRAVSNFFAQLDGQEAQEVYEMVLCEVEAPLLDIIMQHTRGNQTRAANMLGINRGTLRKKLKKYGMN</sequence>
<comment type="function">
    <text evidence="1">Activates ribosomal RNA transcription. Plays a direct role in upstream activation of rRNA promoters.</text>
</comment>
<comment type="subunit">
    <text evidence="1">Homodimer.</text>
</comment>
<comment type="similarity">
    <text evidence="1">Belongs to the transcriptional regulatory Fis family.</text>
</comment>
<proteinExistence type="inferred from homology"/>
<reference key="1">
    <citation type="submission" date="2006-12" db="EMBL/GenBank/DDBJ databases">
        <title>Complete sequence of Shewanella amazonensis SB2B.</title>
        <authorList>
            <consortium name="US DOE Joint Genome Institute"/>
            <person name="Copeland A."/>
            <person name="Lucas S."/>
            <person name="Lapidus A."/>
            <person name="Barry K."/>
            <person name="Detter J.C."/>
            <person name="Glavina del Rio T."/>
            <person name="Hammon N."/>
            <person name="Israni S."/>
            <person name="Dalin E."/>
            <person name="Tice H."/>
            <person name="Pitluck S."/>
            <person name="Munk A.C."/>
            <person name="Brettin T."/>
            <person name="Bruce D."/>
            <person name="Han C."/>
            <person name="Tapia R."/>
            <person name="Gilna P."/>
            <person name="Schmutz J."/>
            <person name="Larimer F."/>
            <person name="Land M."/>
            <person name="Hauser L."/>
            <person name="Kyrpides N."/>
            <person name="Mikhailova N."/>
            <person name="Fredrickson J."/>
            <person name="Richardson P."/>
        </authorList>
    </citation>
    <scope>NUCLEOTIDE SEQUENCE [LARGE SCALE GENOMIC DNA]</scope>
    <source>
        <strain>ATCC BAA-1098 / SB2B</strain>
    </source>
</reference>
<feature type="chain" id="PRO_1000023334" description="DNA-binding protein Fis">
    <location>
        <begin position="1"/>
        <end position="101"/>
    </location>
</feature>
<feature type="DNA-binding region" description="H-T-H motif" evidence="1">
    <location>
        <begin position="77"/>
        <end position="96"/>
    </location>
</feature>
<organism>
    <name type="scientific">Shewanella amazonensis (strain ATCC BAA-1098 / SB2B)</name>
    <dbReference type="NCBI Taxonomy" id="326297"/>
    <lineage>
        <taxon>Bacteria</taxon>
        <taxon>Pseudomonadati</taxon>
        <taxon>Pseudomonadota</taxon>
        <taxon>Gammaproteobacteria</taxon>
        <taxon>Alteromonadales</taxon>
        <taxon>Shewanellaceae</taxon>
        <taxon>Shewanella</taxon>
    </lineage>
</organism>
<accession>A1SAM2</accession>
<dbReference type="EMBL" id="CP000507">
    <property type="protein sequence ID" value="ABM01429.1"/>
    <property type="molecule type" value="Genomic_DNA"/>
</dbReference>
<dbReference type="RefSeq" id="WP_011761333.1">
    <property type="nucleotide sequence ID" value="NC_008700.1"/>
</dbReference>
<dbReference type="SMR" id="A1SAM2"/>
<dbReference type="STRING" id="326297.Sama_3226"/>
<dbReference type="KEGG" id="saz:Sama_3226"/>
<dbReference type="eggNOG" id="COG2901">
    <property type="taxonomic scope" value="Bacteria"/>
</dbReference>
<dbReference type="HOGENOM" id="CLU_158040_3_3_6"/>
<dbReference type="OrthoDB" id="9802388at2"/>
<dbReference type="Proteomes" id="UP000009175">
    <property type="component" value="Chromosome"/>
</dbReference>
<dbReference type="GO" id="GO:0003700">
    <property type="term" value="F:DNA-binding transcription factor activity"/>
    <property type="evidence" value="ECO:0007669"/>
    <property type="project" value="UniProtKB-UniRule"/>
</dbReference>
<dbReference type="GO" id="GO:0043565">
    <property type="term" value="F:sequence-specific DNA binding"/>
    <property type="evidence" value="ECO:0007669"/>
    <property type="project" value="InterPro"/>
</dbReference>
<dbReference type="FunFam" id="1.10.10.60:FF:000006">
    <property type="entry name" value="DNA-binding protein Fis"/>
    <property type="match status" value="1"/>
</dbReference>
<dbReference type="Gene3D" id="1.10.10.60">
    <property type="entry name" value="Homeodomain-like"/>
    <property type="match status" value="1"/>
</dbReference>
<dbReference type="HAMAP" id="MF_00166">
    <property type="entry name" value="DNA_binding_Fis"/>
    <property type="match status" value="1"/>
</dbReference>
<dbReference type="InterPro" id="IPR005412">
    <property type="entry name" value="Fis_DNA-bd"/>
</dbReference>
<dbReference type="InterPro" id="IPR009057">
    <property type="entry name" value="Homeodomain-like_sf"/>
</dbReference>
<dbReference type="InterPro" id="IPR002197">
    <property type="entry name" value="HTH_Fis"/>
</dbReference>
<dbReference type="InterPro" id="IPR050207">
    <property type="entry name" value="Trans_regulatory_Fis"/>
</dbReference>
<dbReference type="NCBIfam" id="NF001659">
    <property type="entry name" value="PRK00430.1"/>
    <property type="match status" value="1"/>
</dbReference>
<dbReference type="PANTHER" id="PTHR47918">
    <property type="entry name" value="DNA-BINDING PROTEIN FIS"/>
    <property type="match status" value="1"/>
</dbReference>
<dbReference type="PANTHER" id="PTHR47918:SF1">
    <property type="entry name" value="DNA-BINDING PROTEIN FIS"/>
    <property type="match status" value="1"/>
</dbReference>
<dbReference type="Pfam" id="PF02954">
    <property type="entry name" value="HTH_8"/>
    <property type="match status" value="1"/>
</dbReference>
<dbReference type="PIRSF" id="PIRSF002097">
    <property type="entry name" value="DNA-binding_Fis"/>
    <property type="match status" value="1"/>
</dbReference>
<dbReference type="PRINTS" id="PR01591">
    <property type="entry name" value="DNABINDNGFIS"/>
</dbReference>
<dbReference type="PRINTS" id="PR01590">
    <property type="entry name" value="HTHFIS"/>
</dbReference>
<dbReference type="SUPFAM" id="SSF46689">
    <property type="entry name" value="Homeodomain-like"/>
    <property type="match status" value="1"/>
</dbReference>
<evidence type="ECO:0000255" key="1">
    <source>
        <dbReference type="HAMAP-Rule" id="MF_00166"/>
    </source>
</evidence>
<gene>
    <name evidence="1" type="primary">fis</name>
    <name type="ordered locus">Sama_3226</name>
</gene>
<keyword id="KW-0010">Activator</keyword>
<keyword id="KW-0238">DNA-binding</keyword>
<keyword id="KW-1185">Reference proteome</keyword>
<keyword id="KW-0804">Transcription</keyword>
<keyword id="KW-0805">Transcription regulation</keyword>
<name>FIS_SHEAM</name>
<protein>
    <recommendedName>
        <fullName evidence="1">DNA-binding protein Fis</fullName>
    </recommendedName>
</protein>